<accession>P96740</accession>
<accession>Q8L0S3</accession>
<gene>
    <name type="primary">pgdS</name>
    <name type="synonym">ywtD</name>
    <name type="ordered locus">BSU35860</name>
</gene>
<sequence>MNTLANWKKFLLVAVIICFLVPIMTKAEIAEADTSSELIVSEAKNLLGYQYKYGGETPKEGFDPSGLIQYVFSKADIHLPRSVNDQYKIGTAVKPENLKPGDILFFKKEGSTGTVPTHDALYIGDGQMVHSTQSKGVIITNYKKSSYWSGTYIGARRIAADPATADVPVVQEAEKYIGVPYVFGGSTPSEGFDCSGLVQYVFQQALGIYLPRSAEQQWAVGEKVAPQNIKPGDVVYFSNTYKTGISHAGIYAGAGRFIQASRSEKVTISYLSEDYWKSKMTGIRRFDNLTIPKENPIVSEATLYVGEVPYKQGGVTPETGFDTAGFVQYVYQKAAGISLPRYATSQYNAGTKIEKADLKPGDIVFFQSTSLNPSIYIGNGQVVHVTLSNGVTITNMNTSTYWKDKYAGSIRVQ</sequence>
<protein>
    <recommendedName>
        <fullName>Gamma-DL-glutamyl hydrolase</fullName>
        <ecNumber>3.4.19.-</ecNumber>
    </recommendedName>
    <alternativeName>
        <fullName>Poly-gamma-glutamate depolymerase</fullName>
        <shortName>PGA depolymerase</shortName>
    </alternativeName>
</protein>
<keyword id="KW-0134">Cell wall</keyword>
<keyword id="KW-0903">Direct protein sequencing</keyword>
<keyword id="KW-0378">Hydrolase</keyword>
<keyword id="KW-0645">Protease</keyword>
<keyword id="KW-1185">Reference proteome</keyword>
<keyword id="KW-0964">Secreted</keyword>
<keyword id="KW-0732">Signal</keyword>
<keyword id="KW-0788">Thiol protease</keyword>
<name>PGDS_BACSU</name>
<reference key="1">
    <citation type="journal article" date="2002" name="Appl. Microbiol. Biotechnol.">
        <title>Biochemistry and molecular genetics of poly-gamma-glutamate synthesis.</title>
        <authorList>
            <person name="Ashiuchi M."/>
            <person name="Misono H."/>
        </authorList>
    </citation>
    <scope>NUCLEOTIDE SEQUENCE [GENOMIC DNA]</scope>
</reference>
<reference key="2">
    <citation type="journal article" date="2003" name="J. Bacteriol.">
        <title>Characterization of the Bacillus subtilis ywtD gene, whose product is involved in gamma-polyglutamic acid degradation.</title>
        <authorList>
            <person name="Suzuki T."/>
            <person name="Tahara Y."/>
        </authorList>
    </citation>
    <scope>NUCLEOTIDE SEQUENCE [GENOMIC DNA]</scope>
    <scope>CHARACTERIZATION</scope>
    <source>
        <strain>NBRC 16449</strain>
    </source>
</reference>
<reference key="3">
    <citation type="journal article" date="1997" name="Microbiology">
        <title>The Bacillus subtilis genome from gerBC (311 degrees) to licR (334 degrees).</title>
        <authorList>
            <person name="Presecan E."/>
            <person name="Moszer I."/>
            <person name="Boursier L."/>
            <person name="Cruz Ramos H."/>
            <person name="De La Fuente V."/>
            <person name="Hullo M.-F."/>
            <person name="Lelong C."/>
            <person name="Schleich S."/>
            <person name="Sekowska A."/>
            <person name="Song B.H."/>
            <person name="Villani G."/>
            <person name="Kunst F."/>
            <person name="Danchin A."/>
            <person name="Glaser P."/>
        </authorList>
    </citation>
    <scope>NUCLEOTIDE SEQUENCE [GENOMIC DNA]</scope>
    <source>
        <strain>168</strain>
    </source>
</reference>
<reference key="4">
    <citation type="journal article" date="1997" name="Nature">
        <title>The complete genome sequence of the Gram-positive bacterium Bacillus subtilis.</title>
        <authorList>
            <person name="Kunst F."/>
            <person name="Ogasawara N."/>
            <person name="Moszer I."/>
            <person name="Albertini A.M."/>
            <person name="Alloni G."/>
            <person name="Azevedo V."/>
            <person name="Bertero M.G."/>
            <person name="Bessieres P."/>
            <person name="Bolotin A."/>
            <person name="Borchert S."/>
            <person name="Borriss R."/>
            <person name="Boursier L."/>
            <person name="Brans A."/>
            <person name="Braun M."/>
            <person name="Brignell S.C."/>
            <person name="Bron S."/>
            <person name="Brouillet S."/>
            <person name="Bruschi C.V."/>
            <person name="Caldwell B."/>
            <person name="Capuano V."/>
            <person name="Carter N.M."/>
            <person name="Choi S.-K."/>
            <person name="Codani J.-J."/>
            <person name="Connerton I.F."/>
            <person name="Cummings N.J."/>
            <person name="Daniel R.A."/>
            <person name="Denizot F."/>
            <person name="Devine K.M."/>
            <person name="Duesterhoeft A."/>
            <person name="Ehrlich S.D."/>
            <person name="Emmerson P.T."/>
            <person name="Entian K.-D."/>
            <person name="Errington J."/>
            <person name="Fabret C."/>
            <person name="Ferrari E."/>
            <person name="Foulger D."/>
            <person name="Fritz C."/>
            <person name="Fujita M."/>
            <person name="Fujita Y."/>
            <person name="Fuma S."/>
            <person name="Galizzi A."/>
            <person name="Galleron N."/>
            <person name="Ghim S.-Y."/>
            <person name="Glaser P."/>
            <person name="Goffeau A."/>
            <person name="Golightly E.J."/>
            <person name="Grandi G."/>
            <person name="Guiseppi G."/>
            <person name="Guy B.J."/>
            <person name="Haga K."/>
            <person name="Haiech J."/>
            <person name="Harwood C.R."/>
            <person name="Henaut A."/>
            <person name="Hilbert H."/>
            <person name="Holsappel S."/>
            <person name="Hosono S."/>
            <person name="Hullo M.-F."/>
            <person name="Itaya M."/>
            <person name="Jones L.-M."/>
            <person name="Joris B."/>
            <person name="Karamata D."/>
            <person name="Kasahara Y."/>
            <person name="Klaerr-Blanchard M."/>
            <person name="Klein C."/>
            <person name="Kobayashi Y."/>
            <person name="Koetter P."/>
            <person name="Koningstein G."/>
            <person name="Krogh S."/>
            <person name="Kumano M."/>
            <person name="Kurita K."/>
            <person name="Lapidus A."/>
            <person name="Lardinois S."/>
            <person name="Lauber J."/>
            <person name="Lazarevic V."/>
            <person name="Lee S.-M."/>
            <person name="Levine A."/>
            <person name="Liu H."/>
            <person name="Masuda S."/>
            <person name="Mauel C."/>
            <person name="Medigue C."/>
            <person name="Medina N."/>
            <person name="Mellado R.P."/>
            <person name="Mizuno M."/>
            <person name="Moestl D."/>
            <person name="Nakai S."/>
            <person name="Noback M."/>
            <person name="Noone D."/>
            <person name="O'Reilly M."/>
            <person name="Ogawa K."/>
            <person name="Ogiwara A."/>
            <person name="Oudega B."/>
            <person name="Park S.-H."/>
            <person name="Parro V."/>
            <person name="Pohl T.M."/>
            <person name="Portetelle D."/>
            <person name="Porwollik S."/>
            <person name="Prescott A.M."/>
            <person name="Presecan E."/>
            <person name="Pujic P."/>
            <person name="Purnelle B."/>
            <person name="Rapoport G."/>
            <person name="Rey M."/>
            <person name="Reynolds S."/>
            <person name="Rieger M."/>
            <person name="Rivolta C."/>
            <person name="Rocha E."/>
            <person name="Roche B."/>
            <person name="Rose M."/>
            <person name="Sadaie Y."/>
            <person name="Sato T."/>
            <person name="Scanlan E."/>
            <person name="Schleich S."/>
            <person name="Schroeter R."/>
            <person name="Scoffone F."/>
            <person name="Sekiguchi J."/>
            <person name="Sekowska A."/>
            <person name="Seror S.J."/>
            <person name="Serror P."/>
            <person name="Shin B.-S."/>
            <person name="Soldo B."/>
            <person name="Sorokin A."/>
            <person name="Tacconi E."/>
            <person name="Takagi T."/>
            <person name="Takahashi H."/>
            <person name="Takemaru K."/>
            <person name="Takeuchi M."/>
            <person name="Tamakoshi A."/>
            <person name="Tanaka T."/>
            <person name="Terpstra P."/>
            <person name="Tognoni A."/>
            <person name="Tosato V."/>
            <person name="Uchiyama S."/>
            <person name="Vandenbol M."/>
            <person name="Vannier F."/>
            <person name="Vassarotti A."/>
            <person name="Viari A."/>
            <person name="Wambutt R."/>
            <person name="Wedler E."/>
            <person name="Wedler H."/>
            <person name="Weitzenegger T."/>
            <person name="Winters P."/>
            <person name="Wipat A."/>
            <person name="Yamamoto H."/>
            <person name="Yamane K."/>
            <person name="Yasumoto K."/>
            <person name="Yata K."/>
            <person name="Yoshida K."/>
            <person name="Yoshikawa H.-F."/>
            <person name="Zumstein E."/>
            <person name="Yoshikawa H."/>
            <person name="Danchin A."/>
        </authorList>
    </citation>
    <scope>NUCLEOTIDE SEQUENCE [LARGE SCALE GENOMIC DNA]</scope>
    <source>
        <strain>168</strain>
    </source>
</reference>
<reference key="5">
    <citation type="journal article" date="2000" name="Microbiology">
        <title>Proteome analysis of Bacillus subtilis extracellular proteins: a two-dimensional protein electrophoretic study.</title>
        <authorList>
            <person name="Hirose I."/>
            <person name="Sano K."/>
            <person name="Shioda I."/>
            <person name="Kumano M."/>
            <person name="Nakamura K."/>
            <person name="Yamane K."/>
        </authorList>
    </citation>
    <scope>PROTEIN SEQUENCE OF 33-43</scope>
    <scope>SUBCELLULAR LOCATION</scope>
    <source>
        <strain>168</strain>
    </source>
</reference>
<reference key="6">
    <citation type="journal article" date="2002" name="Proteomics">
        <title>Stabilization of cell wall proteins in Bacillus subtilis: a proteomic approach.</title>
        <authorList>
            <person name="Antelmann H."/>
            <person name="Yamamoto H."/>
            <person name="Sekiguchi J."/>
            <person name="Hecker M."/>
        </authorList>
    </citation>
    <scope>SUBCELLULAR LOCATION</scope>
    <scope>INDUCTION</scope>
    <scope>IDENTIFICATION BY MASS SPECTROMETRY</scope>
    <source>
        <strain>168</strain>
    </source>
</reference>
<feature type="signal peptide" evidence="2">
    <location>
        <begin position="1"/>
        <end position="32"/>
    </location>
</feature>
<feature type="chain" id="PRO_0000019756" description="Gamma-DL-glutamyl hydrolase">
    <location>
        <begin position="33"/>
        <end position="413"/>
    </location>
</feature>
<feature type="domain" description="NlpC/P60 1" evidence="1">
    <location>
        <begin position="33"/>
        <end position="159"/>
    </location>
</feature>
<feature type="domain" description="NlpC/P60 2" evidence="1">
    <location>
        <begin position="163"/>
        <end position="287"/>
    </location>
</feature>
<feature type="domain" description="NlpC/P60 3" evidence="1">
    <location>
        <begin position="291"/>
        <end position="413"/>
    </location>
</feature>
<feature type="active site" description="Nucleophile" evidence="1">
    <location>
        <position position="194"/>
    </location>
</feature>
<feature type="active site" description="Proton acceptor" evidence="1">
    <location>
        <position position="247"/>
    </location>
</feature>
<feature type="active site" evidence="1">
    <location>
        <position position="259"/>
    </location>
</feature>
<feature type="sequence variant" description="In strain: IFO 16449.">
    <original>TGT</original>
    <variation>NGS</variation>
    <location>
        <begin position="112"/>
        <end position="114"/>
    </location>
</feature>
<feature type="sequence variant" description="In strain: IFO 16449.">
    <original>V</original>
    <variation>I</variation>
    <location>
        <position position="224"/>
    </location>
</feature>
<feature type="sequence variant" description="In strain: IFO 16449.">
    <original>E</original>
    <variation>K</variation>
    <location>
        <position position="354"/>
    </location>
</feature>
<evidence type="ECO:0000255" key="1">
    <source>
        <dbReference type="PROSITE-ProRule" id="PRU01284"/>
    </source>
</evidence>
<evidence type="ECO:0000269" key="2">
    <source>
    </source>
</evidence>
<evidence type="ECO:0000269" key="3">
    <source>
    </source>
</evidence>
<evidence type="ECO:0000305" key="4"/>
<proteinExistence type="evidence at protein level"/>
<comment type="function">
    <text>Cleaves, in an endo-type manner, the gamma-glutamyl bond between D-glutamate and L-glutamate of poly-gamma-glutamate (PGA).</text>
</comment>
<comment type="activity regulation">
    <text>Inhibited by pretreatment with 1 mM 4-(hydroxymercuri)benzoate, a sulfhydryl inhibitor.</text>
</comment>
<comment type="biophysicochemical properties">
    <phDependence>
        <text>Optimum pH is 5.0.</text>
    </phDependence>
    <temperatureDependence>
        <text>Optimum temperature is 45 degrees Celsius.</text>
    </temperatureDependence>
</comment>
<comment type="subcellular location">
    <subcellularLocation>
        <location>Secreted</location>
    </subcellularLocation>
    <subcellularLocation>
        <location>Secreted</location>
        <location>Cell wall</location>
    </subcellularLocation>
    <text>Cell wall localization shown in PubMed:11987133.</text>
</comment>
<comment type="induction">
    <text evidence="3">In stationary phase; under control of SigD.</text>
</comment>
<comment type="similarity">
    <text evidence="1 4">Belongs to the peptidase C40 family.</text>
</comment>
<dbReference type="EC" id="3.4.19.-"/>
<dbReference type="EMBL" id="AB085821">
    <property type="protein sequence ID" value="BAB96576.1"/>
    <property type="molecule type" value="Genomic_DNA"/>
</dbReference>
<dbReference type="EMBL" id="AB080748">
    <property type="protein sequence ID" value="BAC11878.1"/>
    <property type="molecule type" value="Genomic_DNA"/>
</dbReference>
<dbReference type="EMBL" id="Z92954">
    <property type="protein sequence ID" value="CAB07476.1"/>
    <property type="molecule type" value="Genomic_DNA"/>
</dbReference>
<dbReference type="EMBL" id="AL009126">
    <property type="protein sequence ID" value="CAB15603.1"/>
    <property type="molecule type" value="Genomic_DNA"/>
</dbReference>
<dbReference type="PIR" id="B70070">
    <property type="entry name" value="B70070"/>
</dbReference>
<dbReference type="RefSeq" id="NP_391467.1">
    <property type="nucleotide sequence ID" value="NC_000964.3"/>
</dbReference>
<dbReference type="RefSeq" id="WP_003242751.1">
    <property type="nucleotide sequence ID" value="NZ_OZ025638.1"/>
</dbReference>
<dbReference type="SMR" id="P96740"/>
<dbReference type="FunCoup" id="P96740">
    <property type="interactions" value="26"/>
</dbReference>
<dbReference type="STRING" id="224308.BSU35860"/>
<dbReference type="MEROPS" id="C40.005"/>
<dbReference type="PaxDb" id="224308-BSU35860"/>
<dbReference type="DNASU" id="936837"/>
<dbReference type="EnsemblBacteria" id="CAB15603">
    <property type="protein sequence ID" value="CAB15603"/>
    <property type="gene ID" value="BSU_35860"/>
</dbReference>
<dbReference type="GeneID" id="936837"/>
<dbReference type="KEGG" id="bsu:BSU35860"/>
<dbReference type="PATRIC" id="fig|224308.179.peg.3882"/>
<dbReference type="eggNOG" id="COG0791">
    <property type="taxonomic scope" value="Bacteria"/>
</dbReference>
<dbReference type="InParanoid" id="P96740"/>
<dbReference type="OrthoDB" id="9813368at2"/>
<dbReference type="BioCyc" id="BSUB:BSU35860-MONOMER"/>
<dbReference type="Proteomes" id="UP000001570">
    <property type="component" value="Chromosome"/>
</dbReference>
<dbReference type="GO" id="GO:0005576">
    <property type="term" value="C:extracellular region"/>
    <property type="evidence" value="ECO:0007669"/>
    <property type="project" value="UniProtKB-SubCell"/>
</dbReference>
<dbReference type="GO" id="GO:0008234">
    <property type="term" value="F:cysteine-type peptidase activity"/>
    <property type="evidence" value="ECO:0007669"/>
    <property type="project" value="UniProtKB-KW"/>
</dbReference>
<dbReference type="GO" id="GO:0004175">
    <property type="term" value="F:endopeptidase activity"/>
    <property type="evidence" value="ECO:0000318"/>
    <property type="project" value="GO_Central"/>
</dbReference>
<dbReference type="GO" id="GO:0000270">
    <property type="term" value="P:peptidoglycan metabolic process"/>
    <property type="evidence" value="ECO:0000318"/>
    <property type="project" value="GO_Central"/>
</dbReference>
<dbReference type="GO" id="GO:0006508">
    <property type="term" value="P:proteolysis"/>
    <property type="evidence" value="ECO:0007669"/>
    <property type="project" value="UniProtKB-KW"/>
</dbReference>
<dbReference type="Gene3D" id="3.90.1720.10">
    <property type="entry name" value="endopeptidase domain like (from Nostoc punctiforme)"/>
    <property type="match status" value="3"/>
</dbReference>
<dbReference type="InterPro" id="IPR000064">
    <property type="entry name" value="NLP_P60_dom"/>
</dbReference>
<dbReference type="InterPro" id="IPR038765">
    <property type="entry name" value="Papain-like_cys_pep_sf"/>
</dbReference>
<dbReference type="InterPro" id="IPR051202">
    <property type="entry name" value="Peptidase_C40"/>
</dbReference>
<dbReference type="PANTHER" id="PTHR47053">
    <property type="entry name" value="MUREIN DD-ENDOPEPTIDASE MEPH-RELATED"/>
    <property type="match status" value="1"/>
</dbReference>
<dbReference type="PANTHER" id="PTHR47053:SF1">
    <property type="entry name" value="MUREIN DD-ENDOPEPTIDASE MEPH-RELATED"/>
    <property type="match status" value="1"/>
</dbReference>
<dbReference type="Pfam" id="PF00877">
    <property type="entry name" value="NLPC_P60"/>
    <property type="match status" value="3"/>
</dbReference>
<dbReference type="SUPFAM" id="SSF54001">
    <property type="entry name" value="Cysteine proteinases"/>
    <property type="match status" value="3"/>
</dbReference>
<dbReference type="PROSITE" id="PS51935">
    <property type="entry name" value="NLPC_P60"/>
    <property type="match status" value="3"/>
</dbReference>
<organism>
    <name type="scientific">Bacillus subtilis (strain 168)</name>
    <dbReference type="NCBI Taxonomy" id="224308"/>
    <lineage>
        <taxon>Bacteria</taxon>
        <taxon>Bacillati</taxon>
        <taxon>Bacillota</taxon>
        <taxon>Bacilli</taxon>
        <taxon>Bacillales</taxon>
        <taxon>Bacillaceae</taxon>
        <taxon>Bacillus</taxon>
    </lineage>
</organism>